<gene>
    <name evidence="1" type="primary">cyaY</name>
    <name type="ordered locus">VC_0123</name>
</gene>
<organism>
    <name type="scientific">Vibrio cholerae serotype O1 (strain ATCC 39315 / El Tor Inaba N16961)</name>
    <dbReference type="NCBI Taxonomy" id="243277"/>
    <lineage>
        <taxon>Bacteria</taxon>
        <taxon>Pseudomonadati</taxon>
        <taxon>Pseudomonadota</taxon>
        <taxon>Gammaproteobacteria</taxon>
        <taxon>Vibrionales</taxon>
        <taxon>Vibrionaceae</taxon>
        <taxon>Vibrio</taxon>
    </lineage>
</organism>
<accession>Q9KVL8</accession>
<protein>
    <recommendedName>
        <fullName evidence="1">Iron-sulfur cluster assembly protein CyaY</fullName>
    </recommendedName>
</protein>
<feature type="chain" id="PRO_0000193964" description="Iron-sulfur cluster assembly protein CyaY">
    <location>
        <begin position="1"/>
        <end position="104"/>
    </location>
</feature>
<proteinExistence type="inferred from homology"/>
<reference key="1">
    <citation type="journal article" date="2000" name="Nature">
        <title>DNA sequence of both chromosomes of the cholera pathogen Vibrio cholerae.</title>
        <authorList>
            <person name="Heidelberg J.F."/>
            <person name="Eisen J.A."/>
            <person name="Nelson W.C."/>
            <person name="Clayton R.A."/>
            <person name="Gwinn M.L."/>
            <person name="Dodson R.J."/>
            <person name="Haft D.H."/>
            <person name="Hickey E.K."/>
            <person name="Peterson J.D."/>
            <person name="Umayam L.A."/>
            <person name="Gill S.R."/>
            <person name="Nelson K.E."/>
            <person name="Read T.D."/>
            <person name="Tettelin H."/>
            <person name="Richardson D.L."/>
            <person name="Ermolaeva M.D."/>
            <person name="Vamathevan J.J."/>
            <person name="Bass S."/>
            <person name="Qin H."/>
            <person name="Dragoi I."/>
            <person name="Sellers P."/>
            <person name="McDonald L.A."/>
            <person name="Utterback T.R."/>
            <person name="Fleischmann R.D."/>
            <person name="Nierman W.C."/>
            <person name="White O."/>
            <person name="Salzberg S.L."/>
            <person name="Smith H.O."/>
            <person name="Colwell R.R."/>
            <person name="Mekalanos J.J."/>
            <person name="Venter J.C."/>
            <person name="Fraser C.M."/>
        </authorList>
    </citation>
    <scope>NUCLEOTIDE SEQUENCE [LARGE SCALE GENOMIC DNA]</scope>
    <source>
        <strain>ATCC 39315 / El Tor Inaba N16961</strain>
    </source>
</reference>
<keyword id="KW-0408">Iron</keyword>
<keyword id="KW-0479">Metal-binding</keyword>
<keyword id="KW-1185">Reference proteome</keyword>
<name>CYAY_VIBCH</name>
<comment type="function">
    <text evidence="1">Involved in iron-sulfur (Fe-S) cluster assembly. May act as a regulator of Fe-S biogenesis.</text>
</comment>
<comment type="similarity">
    <text evidence="1 2">Belongs to the frataxin family.</text>
</comment>
<dbReference type="EMBL" id="AE003852">
    <property type="protein sequence ID" value="AAF93301.1"/>
    <property type="molecule type" value="Genomic_DNA"/>
</dbReference>
<dbReference type="PIR" id="E82360">
    <property type="entry name" value="E82360"/>
</dbReference>
<dbReference type="RefSeq" id="NP_229782.1">
    <property type="nucleotide sequence ID" value="NC_002505.1"/>
</dbReference>
<dbReference type="RefSeq" id="WP_001005953.1">
    <property type="nucleotide sequence ID" value="NZ_LT906614.1"/>
</dbReference>
<dbReference type="SMR" id="Q9KVL8"/>
<dbReference type="STRING" id="243277.VC_0123"/>
<dbReference type="DNASU" id="2612963"/>
<dbReference type="EnsemblBacteria" id="AAF93301">
    <property type="protein sequence ID" value="AAF93301"/>
    <property type="gene ID" value="VC_0123"/>
</dbReference>
<dbReference type="GeneID" id="89513210"/>
<dbReference type="KEGG" id="vch:VC_0123"/>
<dbReference type="PATRIC" id="fig|243277.26.peg.114"/>
<dbReference type="eggNOG" id="COG1965">
    <property type="taxonomic scope" value="Bacteria"/>
</dbReference>
<dbReference type="HOGENOM" id="CLU_080880_3_0_6"/>
<dbReference type="Proteomes" id="UP000000584">
    <property type="component" value="Chromosome 1"/>
</dbReference>
<dbReference type="GO" id="GO:0005829">
    <property type="term" value="C:cytosol"/>
    <property type="evidence" value="ECO:0000318"/>
    <property type="project" value="GO_Central"/>
</dbReference>
<dbReference type="GO" id="GO:0008199">
    <property type="term" value="F:ferric iron binding"/>
    <property type="evidence" value="ECO:0000318"/>
    <property type="project" value="GO_Central"/>
</dbReference>
<dbReference type="GO" id="GO:0008198">
    <property type="term" value="F:ferrous iron binding"/>
    <property type="evidence" value="ECO:0000318"/>
    <property type="project" value="GO_Central"/>
</dbReference>
<dbReference type="GO" id="GO:0016226">
    <property type="term" value="P:iron-sulfur cluster assembly"/>
    <property type="evidence" value="ECO:0000318"/>
    <property type="project" value="GO_Central"/>
</dbReference>
<dbReference type="CDD" id="cd00503">
    <property type="entry name" value="Frataxin"/>
    <property type="match status" value="1"/>
</dbReference>
<dbReference type="FunFam" id="3.30.920.10:FF:000007">
    <property type="entry name" value="Iron-sulfur cluster assembly protein CyaY"/>
    <property type="match status" value="1"/>
</dbReference>
<dbReference type="Gene3D" id="3.30.920.10">
    <property type="entry name" value="Frataxin/CyaY"/>
    <property type="match status" value="1"/>
</dbReference>
<dbReference type="HAMAP" id="MF_00142">
    <property type="entry name" value="CyaY"/>
    <property type="match status" value="1"/>
</dbReference>
<dbReference type="InterPro" id="IPR047584">
    <property type="entry name" value="CyaY"/>
</dbReference>
<dbReference type="InterPro" id="IPR002908">
    <property type="entry name" value="Frataxin/CyaY"/>
</dbReference>
<dbReference type="InterPro" id="IPR036524">
    <property type="entry name" value="Frataxin/CyaY_sf"/>
</dbReference>
<dbReference type="InterPro" id="IPR020895">
    <property type="entry name" value="Frataxin_CS"/>
</dbReference>
<dbReference type="NCBIfam" id="TIGR03421">
    <property type="entry name" value="FeS_CyaY"/>
    <property type="match status" value="1"/>
</dbReference>
<dbReference type="PANTHER" id="PTHR16821">
    <property type="entry name" value="FRATAXIN"/>
    <property type="match status" value="1"/>
</dbReference>
<dbReference type="PANTHER" id="PTHR16821:SF2">
    <property type="entry name" value="FRATAXIN, MITOCHONDRIAL"/>
    <property type="match status" value="1"/>
</dbReference>
<dbReference type="Pfam" id="PF01491">
    <property type="entry name" value="Frataxin_Cyay"/>
    <property type="match status" value="1"/>
</dbReference>
<dbReference type="SMART" id="SM01219">
    <property type="entry name" value="Frataxin_Cyay"/>
    <property type="match status" value="1"/>
</dbReference>
<dbReference type="SUPFAM" id="SSF55387">
    <property type="entry name" value="Frataxin/Nqo15-like"/>
    <property type="match status" value="1"/>
</dbReference>
<dbReference type="PROSITE" id="PS01344">
    <property type="entry name" value="FRATAXIN_1"/>
    <property type="match status" value="1"/>
</dbReference>
<dbReference type="PROSITE" id="PS50810">
    <property type="entry name" value="FRATAXIN_2"/>
    <property type="match status" value="1"/>
</dbReference>
<sequence>MNETEFHQLVDSQLERIEAAIDEAGADIDYETSGNVMTLEFDDGSQIIINRQEPMREIWLASKSGGYHFKSIDGEWICSKTGLELLTLLKQECDKHADEPIDWV</sequence>
<evidence type="ECO:0000255" key="1">
    <source>
        <dbReference type="HAMAP-Rule" id="MF_00142"/>
    </source>
</evidence>
<evidence type="ECO:0000305" key="2"/>